<reference key="1">
    <citation type="submission" date="2006-08" db="EMBL/GenBank/DDBJ databases">
        <title>Complete sequence of Shewanella frigidimarina NCIMB 400.</title>
        <authorList>
            <consortium name="US DOE Joint Genome Institute"/>
            <person name="Copeland A."/>
            <person name="Lucas S."/>
            <person name="Lapidus A."/>
            <person name="Barry K."/>
            <person name="Detter J.C."/>
            <person name="Glavina del Rio T."/>
            <person name="Hammon N."/>
            <person name="Israni S."/>
            <person name="Dalin E."/>
            <person name="Tice H."/>
            <person name="Pitluck S."/>
            <person name="Fredrickson J.K."/>
            <person name="Kolker E."/>
            <person name="McCuel L.A."/>
            <person name="DiChristina T."/>
            <person name="Nealson K.H."/>
            <person name="Newman D."/>
            <person name="Tiedje J.M."/>
            <person name="Zhou J."/>
            <person name="Romine M.F."/>
            <person name="Culley D.E."/>
            <person name="Serres M."/>
            <person name="Chertkov O."/>
            <person name="Brettin T."/>
            <person name="Bruce D."/>
            <person name="Han C."/>
            <person name="Tapia R."/>
            <person name="Gilna P."/>
            <person name="Schmutz J."/>
            <person name="Larimer F."/>
            <person name="Land M."/>
            <person name="Hauser L."/>
            <person name="Kyrpides N."/>
            <person name="Mikhailova N."/>
            <person name="Richardson P."/>
        </authorList>
    </citation>
    <scope>NUCLEOTIDE SEQUENCE [LARGE SCALE GENOMIC DNA]</scope>
    <source>
        <strain>NCIMB 400</strain>
    </source>
</reference>
<proteinExistence type="inferred from homology"/>
<keyword id="KW-0963">Cytoplasm</keyword>
<keyword id="KW-0324">Glycolysis</keyword>
<keyword id="KW-0456">Lyase</keyword>
<keyword id="KW-0460">Magnesium</keyword>
<keyword id="KW-0479">Metal-binding</keyword>
<keyword id="KW-1185">Reference proteome</keyword>
<keyword id="KW-0964">Secreted</keyword>
<evidence type="ECO:0000255" key="1">
    <source>
        <dbReference type="HAMAP-Rule" id="MF_00318"/>
    </source>
</evidence>
<dbReference type="EC" id="4.2.1.11" evidence="1"/>
<dbReference type="EMBL" id="CP000447">
    <property type="protein sequence ID" value="ABI70905.1"/>
    <property type="molecule type" value="Genomic_DNA"/>
</dbReference>
<dbReference type="RefSeq" id="WP_011636526.1">
    <property type="nucleotide sequence ID" value="NC_008345.1"/>
</dbReference>
<dbReference type="SMR" id="Q086B0"/>
<dbReference type="STRING" id="318167.Sfri_1052"/>
<dbReference type="KEGG" id="sfr:Sfri_1052"/>
<dbReference type="eggNOG" id="COG0148">
    <property type="taxonomic scope" value="Bacteria"/>
</dbReference>
<dbReference type="HOGENOM" id="CLU_031223_2_1_6"/>
<dbReference type="OrthoDB" id="9804716at2"/>
<dbReference type="UniPathway" id="UPA00109">
    <property type="reaction ID" value="UER00187"/>
</dbReference>
<dbReference type="Proteomes" id="UP000000684">
    <property type="component" value="Chromosome"/>
</dbReference>
<dbReference type="GO" id="GO:0009986">
    <property type="term" value="C:cell surface"/>
    <property type="evidence" value="ECO:0007669"/>
    <property type="project" value="UniProtKB-SubCell"/>
</dbReference>
<dbReference type="GO" id="GO:0005576">
    <property type="term" value="C:extracellular region"/>
    <property type="evidence" value="ECO:0007669"/>
    <property type="project" value="UniProtKB-SubCell"/>
</dbReference>
<dbReference type="GO" id="GO:0000015">
    <property type="term" value="C:phosphopyruvate hydratase complex"/>
    <property type="evidence" value="ECO:0007669"/>
    <property type="project" value="InterPro"/>
</dbReference>
<dbReference type="GO" id="GO:0000287">
    <property type="term" value="F:magnesium ion binding"/>
    <property type="evidence" value="ECO:0007669"/>
    <property type="project" value="UniProtKB-UniRule"/>
</dbReference>
<dbReference type="GO" id="GO:0004634">
    <property type="term" value="F:phosphopyruvate hydratase activity"/>
    <property type="evidence" value="ECO:0007669"/>
    <property type="project" value="UniProtKB-UniRule"/>
</dbReference>
<dbReference type="GO" id="GO:0006096">
    <property type="term" value="P:glycolytic process"/>
    <property type="evidence" value="ECO:0007669"/>
    <property type="project" value="UniProtKB-UniRule"/>
</dbReference>
<dbReference type="CDD" id="cd03313">
    <property type="entry name" value="enolase"/>
    <property type="match status" value="1"/>
</dbReference>
<dbReference type="FunFam" id="3.20.20.120:FF:000001">
    <property type="entry name" value="Enolase"/>
    <property type="match status" value="1"/>
</dbReference>
<dbReference type="FunFam" id="3.30.390.10:FF:000001">
    <property type="entry name" value="Enolase"/>
    <property type="match status" value="1"/>
</dbReference>
<dbReference type="Gene3D" id="3.20.20.120">
    <property type="entry name" value="Enolase-like C-terminal domain"/>
    <property type="match status" value="1"/>
</dbReference>
<dbReference type="Gene3D" id="3.30.390.10">
    <property type="entry name" value="Enolase-like, N-terminal domain"/>
    <property type="match status" value="1"/>
</dbReference>
<dbReference type="HAMAP" id="MF_00318">
    <property type="entry name" value="Enolase"/>
    <property type="match status" value="1"/>
</dbReference>
<dbReference type="InterPro" id="IPR000941">
    <property type="entry name" value="Enolase"/>
</dbReference>
<dbReference type="InterPro" id="IPR036849">
    <property type="entry name" value="Enolase-like_C_sf"/>
</dbReference>
<dbReference type="InterPro" id="IPR029017">
    <property type="entry name" value="Enolase-like_N"/>
</dbReference>
<dbReference type="InterPro" id="IPR020810">
    <property type="entry name" value="Enolase_C"/>
</dbReference>
<dbReference type="InterPro" id="IPR020809">
    <property type="entry name" value="Enolase_CS"/>
</dbReference>
<dbReference type="InterPro" id="IPR020811">
    <property type="entry name" value="Enolase_N"/>
</dbReference>
<dbReference type="NCBIfam" id="TIGR01060">
    <property type="entry name" value="eno"/>
    <property type="match status" value="1"/>
</dbReference>
<dbReference type="PANTHER" id="PTHR11902">
    <property type="entry name" value="ENOLASE"/>
    <property type="match status" value="1"/>
</dbReference>
<dbReference type="PANTHER" id="PTHR11902:SF1">
    <property type="entry name" value="ENOLASE"/>
    <property type="match status" value="1"/>
</dbReference>
<dbReference type="Pfam" id="PF00113">
    <property type="entry name" value="Enolase_C"/>
    <property type="match status" value="1"/>
</dbReference>
<dbReference type="Pfam" id="PF03952">
    <property type="entry name" value="Enolase_N"/>
    <property type="match status" value="1"/>
</dbReference>
<dbReference type="PIRSF" id="PIRSF001400">
    <property type="entry name" value="Enolase"/>
    <property type="match status" value="1"/>
</dbReference>
<dbReference type="PRINTS" id="PR00148">
    <property type="entry name" value="ENOLASE"/>
</dbReference>
<dbReference type="SFLD" id="SFLDF00002">
    <property type="entry name" value="enolase"/>
    <property type="match status" value="1"/>
</dbReference>
<dbReference type="SFLD" id="SFLDG00178">
    <property type="entry name" value="enolase"/>
    <property type="match status" value="1"/>
</dbReference>
<dbReference type="SMART" id="SM01192">
    <property type="entry name" value="Enolase_C"/>
    <property type="match status" value="1"/>
</dbReference>
<dbReference type="SMART" id="SM01193">
    <property type="entry name" value="Enolase_N"/>
    <property type="match status" value="1"/>
</dbReference>
<dbReference type="SUPFAM" id="SSF51604">
    <property type="entry name" value="Enolase C-terminal domain-like"/>
    <property type="match status" value="1"/>
</dbReference>
<dbReference type="SUPFAM" id="SSF54826">
    <property type="entry name" value="Enolase N-terminal domain-like"/>
    <property type="match status" value="1"/>
</dbReference>
<dbReference type="PROSITE" id="PS00164">
    <property type="entry name" value="ENOLASE"/>
    <property type="match status" value="1"/>
</dbReference>
<name>ENO_SHEFN</name>
<protein>
    <recommendedName>
        <fullName evidence="1">Enolase</fullName>
        <ecNumber evidence="1">4.2.1.11</ecNumber>
    </recommendedName>
    <alternativeName>
        <fullName evidence="1">2-phospho-D-glycerate hydro-lyase</fullName>
    </alternativeName>
    <alternativeName>
        <fullName evidence="1">2-phosphoglycerate dehydratase</fullName>
    </alternativeName>
</protein>
<gene>
    <name evidence="1" type="primary">eno</name>
    <name type="ordered locus">Sfri_1052</name>
</gene>
<comment type="function">
    <text evidence="1">Catalyzes the reversible conversion of 2-phosphoglycerate (2-PG) into phosphoenolpyruvate (PEP). It is essential for the degradation of carbohydrates via glycolysis.</text>
</comment>
<comment type="catalytic activity">
    <reaction evidence="1">
        <text>(2R)-2-phosphoglycerate = phosphoenolpyruvate + H2O</text>
        <dbReference type="Rhea" id="RHEA:10164"/>
        <dbReference type="ChEBI" id="CHEBI:15377"/>
        <dbReference type="ChEBI" id="CHEBI:58289"/>
        <dbReference type="ChEBI" id="CHEBI:58702"/>
        <dbReference type="EC" id="4.2.1.11"/>
    </reaction>
</comment>
<comment type="cofactor">
    <cofactor evidence="1">
        <name>Mg(2+)</name>
        <dbReference type="ChEBI" id="CHEBI:18420"/>
    </cofactor>
    <text evidence="1">Binds a second Mg(2+) ion via substrate during catalysis.</text>
</comment>
<comment type="pathway">
    <text evidence="1">Carbohydrate degradation; glycolysis; pyruvate from D-glyceraldehyde 3-phosphate: step 4/5.</text>
</comment>
<comment type="subunit">
    <text evidence="1">Component of the RNA degradosome, a multiprotein complex involved in RNA processing and mRNA degradation.</text>
</comment>
<comment type="subcellular location">
    <subcellularLocation>
        <location evidence="1">Cytoplasm</location>
    </subcellularLocation>
    <subcellularLocation>
        <location evidence="1">Secreted</location>
    </subcellularLocation>
    <subcellularLocation>
        <location evidence="1">Cell surface</location>
    </subcellularLocation>
    <text evidence="1">Fractions of enolase are present in both the cytoplasm and on the cell surface.</text>
</comment>
<comment type="similarity">
    <text evidence="1">Belongs to the enolase family.</text>
</comment>
<organism>
    <name type="scientific">Shewanella frigidimarina (strain NCIMB 400)</name>
    <dbReference type="NCBI Taxonomy" id="318167"/>
    <lineage>
        <taxon>Bacteria</taxon>
        <taxon>Pseudomonadati</taxon>
        <taxon>Pseudomonadota</taxon>
        <taxon>Gammaproteobacteria</taxon>
        <taxon>Alteromonadales</taxon>
        <taxon>Shewanellaceae</taxon>
        <taxon>Shewanella</taxon>
    </lineage>
</organism>
<accession>Q086B0</accession>
<feature type="chain" id="PRO_0000267101" description="Enolase">
    <location>
        <begin position="1"/>
        <end position="433"/>
    </location>
</feature>
<feature type="active site" description="Proton donor" evidence="1">
    <location>
        <position position="209"/>
    </location>
</feature>
<feature type="active site" description="Proton acceptor" evidence="1">
    <location>
        <position position="343"/>
    </location>
</feature>
<feature type="binding site" evidence="1">
    <location>
        <position position="167"/>
    </location>
    <ligand>
        <name>(2R)-2-phosphoglycerate</name>
        <dbReference type="ChEBI" id="CHEBI:58289"/>
    </ligand>
</feature>
<feature type="binding site" evidence="1">
    <location>
        <position position="246"/>
    </location>
    <ligand>
        <name>Mg(2+)</name>
        <dbReference type="ChEBI" id="CHEBI:18420"/>
    </ligand>
</feature>
<feature type="binding site" evidence="1">
    <location>
        <position position="291"/>
    </location>
    <ligand>
        <name>Mg(2+)</name>
        <dbReference type="ChEBI" id="CHEBI:18420"/>
    </ligand>
</feature>
<feature type="binding site" evidence="1">
    <location>
        <position position="318"/>
    </location>
    <ligand>
        <name>Mg(2+)</name>
        <dbReference type="ChEBI" id="CHEBI:18420"/>
    </ligand>
</feature>
<feature type="binding site" evidence="1">
    <location>
        <position position="343"/>
    </location>
    <ligand>
        <name>(2R)-2-phosphoglycerate</name>
        <dbReference type="ChEBI" id="CHEBI:58289"/>
    </ligand>
</feature>
<feature type="binding site" evidence="1">
    <location>
        <position position="372"/>
    </location>
    <ligand>
        <name>(2R)-2-phosphoglycerate</name>
        <dbReference type="ChEBI" id="CHEBI:58289"/>
    </ligand>
</feature>
<feature type="binding site" evidence="1">
    <location>
        <position position="373"/>
    </location>
    <ligand>
        <name>(2R)-2-phosphoglycerate</name>
        <dbReference type="ChEBI" id="CHEBI:58289"/>
    </ligand>
</feature>
<feature type="binding site" evidence="1">
    <location>
        <position position="394"/>
    </location>
    <ligand>
        <name>(2R)-2-phosphoglycerate</name>
        <dbReference type="ChEBI" id="CHEBI:58289"/>
    </ligand>
</feature>
<sequence>MANIIKVIGREIMDSRGNPTVEAEVHLEGGFIGMAAAPSGASTGSREALELRDGDKARYLGKGVLKAVAAVNGPIAEALKGKDALAQAELDQIMIDLDGTENKAKFGANAILAVSLAVAKAAADAKHVPLYAHIADLNGTPGVYSMPLPMMNIINGGEHADNSVDIQEFMIQPVGAKTFREGLRMGAEVFHSLAKVLKADGHSTAVGDEGGFAPNLASNEAALAAIKVAVANAGYELGKDITLAMDCAASEFYDKEANIYDLKGEGKKFTSEEFNFFLQGLTERYPIVSIEDGLDESDWDGFAHQTKLMGDKIQLVGDDLFVTNTKILKRGIDNGIANSILIKFNQIGTLTETLAAIKMAKDAGFTVVISHRSGETEDSTIADLAVGTAAGQIKTGSLSRSDRVAKYNQLLRIEEALGSKAPYNGLKEVKGQG</sequence>